<dbReference type="EC" id="2.7.1.50" evidence="1"/>
<dbReference type="EMBL" id="CP001357">
    <property type="protein sequence ID" value="ACN82634.1"/>
    <property type="molecule type" value="Genomic_DNA"/>
</dbReference>
<dbReference type="RefSeq" id="WP_012669687.1">
    <property type="nucleotide sequence ID" value="NC_012225.1"/>
</dbReference>
<dbReference type="SMR" id="C0QWJ2"/>
<dbReference type="STRING" id="565034.BHWA1_00131"/>
<dbReference type="GeneID" id="63963924"/>
<dbReference type="KEGG" id="bhy:BHWA1_00131"/>
<dbReference type="eggNOG" id="COG2145">
    <property type="taxonomic scope" value="Bacteria"/>
</dbReference>
<dbReference type="HOGENOM" id="CLU_019943_0_1_12"/>
<dbReference type="UniPathway" id="UPA00060">
    <property type="reaction ID" value="UER00139"/>
</dbReference>
<dbReference type="Proteomes" id="UP000001803">
    <property type="component" value="Chromosome"/>
</dbReference>
<dbReference type="GO" id="GO:0005524">
    <property type="term" value="F:ATP binding"/>
    <property type="evidence" value="ECO:0007669"/>
    <property type="project" value="UniProtKB-UniRule"/>
</dbReference>
<dbReference type="GO" id="GO:0047453">
    <property type="term" value="F:ATP-dependent NAD(P)H-hydrate dehydratase activity"/>
    <property type="evidence" value="ECO:0007669"/>
    <property type="project" value="TreeGrafter"/>
</dbReference>
<dbReference type="GO" id="GO:0004417">
    <property type="term" value="F:hydroxyethylthiazole kinase activity"/>
    <property type="evidence" value="ECO:0007669"/>
    <property type="project" value="UniProtKB-UniRule"/>
</dbReference>
<dbReference type="GO" id="GO:0000287">
    <property type="term" value="F:magnesium ion binding"/>
    <property type="evidence" value="ECO:0007669"/>
    <property type="project" value="UniProtKB-UniRule"/>
</dbReference>
<dbReference type="GO" id="GO:0110051">
    <property type="term" value="P:metabolite repair"/>
    <property type="evidence" value="ECO:0007669"/>
    <property type="project" value="TreeGrafter"/>
</dbReference>
<dbReference type="GO" id="GO:0009228">
    <property type="term" value="P:thiamine biosynthetic process"/>
    <property type="evidence" value="ECO:0007669"/>
    <property type="project" value="UniProtKB-KW"/>
</dbReference>
<dbReference type="GO" id="GO:0009229">
    <property type="term" value="P:thiamine diphosphate biosynthetic process"/>
    <property type="evidence" value="ECO:0007669"/>
    <property type="project" value="UniProtKB-UniRule"/>
</dbReference>
<dbReference type="CDD" id="cd01170">
    <property type="entry name" value="THZ_kinase"/>
    <property type="match status" value="1"/>
</dbReference>
<dbReference type="Gene3D" id="3.40.1190.20">
    <property type="match status" value="1"/>
</dbReference>
<dbReference type="HAMAP" id="MF_00228">
    <property type="entry name" value="Thz_kinase"/>
    <property type="match status" value="1"/>
</dbReference>
<dbReference type="InterPro" id="IPR000417">
    <property type="entry name" value="Hyethyz_kinase"/>
</dbReference>
<dbReference type="InterPro" id="IPR029056">
    <property type="entry name" value="Ribokinase-like"/>
</dbReference>
<dbReference type="NCBIfam" id="NF006830">
    <property type="entry name" value="PRK09355.1"/>
    <property type="match status" value="1"/>
</dbReference>
<dbReference type="NCBIfam" id="TIGR00694">
    <property type="entry name" value="thiM"/>
    <property type="match status" value="1"/>
</dbReference>
<dbReference type="PANTHER" id="PTHR12592:SF0">
    <property type="entry name" value="ATP-DEPENDENT (S)-NAD(P)H-HYDRATE DEHYDRATASE"/>
    <property type="match status" value="1"/>
</dbReference>
<dbReference type="PANTHER" id="PTHR12592">
    <property type="entry name" value="ATP-DEPENDENT (S)-NAD(P)H-HYDRATE DEHYDRATASE FAMILY MEMBER"/>
    <property type="match status" value="1"/>
</dbReference>
<dbReference type="Pfam" id="PF02110">
    <property type="entry name" value="HK"/>
    <property type="match status" value="1"/>
</dbReference>
<dbReference type="PIRSF" id="PIRSF000513">
    <property type="entry name" value="Thz_kinase"/>
    <property type="match status" value="1"/>
</dbReference>
<dbReference type="PRINTS" id="PR01099">
    <property type="entry name" value="HYETHTZKNASE"/>
</dbReference>
<dbReference type="SUPFAM" id="SSF53613">
    <property type="entry name" value="Ribokinase-like"/>
    <property type="match status" value="1"/>
</dbReference>
<keyword id="KW-0067">ATP-binding</keyword>
<keyword id="KW-0418">Kinase</keyword>
<keyword id="KW-0460">Magnesium</keyword>
<keyword id="KW-0479">Metal-binding</keyword>
<keyword id="KW-0547">Nucleotide-binding</keyword>
<keyword id="KW-0784">Thiamine biosynthesis</keyword>
<keyword id="KW-0808">Transferase</keyword>
<comment type="function">
    <text evidence="1">Catalyzes the phosphorylation of the hydroxyl group of 4-methyl-5-beta-hydroxyethylthiazole (THZ).</text>
</comment>
<comment type="catalytic activity">
    <reaction evidence="1">
        <text>5-(2-hydroxyethyl)-4-methylthiazole + ATP = 4-methyl-5-(2-phosphooxyethyl)-thiazole + ADP + H(+)</text>
        <dbReference type="Rhea" id="RHEA:24212"/>
        <dbReference type="ChEBI" id="CHEBI:15378"/>
        <dbReference type="ChEBI" id="CHEBI:17957"/>
        <dbReference type="ChEBI" id="CHEBI:30616"/>
        <dbReference type="ChEBI" id="CHEBI:58296"/>
        <dbReference type="ChEBI" id="CHEBI:456216"/>
        <dbReference type="EC" id="2.7.1.50"/>
    </reaction>
</comment>
<comment type="cofactor">
    <cofactor evidence="1">
        <name>Mg(2+)</name>
        <dbReference type="ChEBI" id="CHEBI:18420"/>
    </cofactor>
</comment>
<comment type="pathway">
    <text evidence="1">Cofactor biosynthesis; thiamine diphosphate biosynthesis; 4-methyl-5-(2-phosphoethyl)-thiazole from 5-(2-hydroxyethyl)-4-methylthiazole: step 1/1.</text>
</comment>
<comment type="similarity">
    <text evidence="1">Belongs to the Thz kinase family.</text>
</comment>
<protein>
    <recommendedName>
        <fullName evidence="1">Hydroxyethylthiazole kinase</fullName>
        <ecNumber evidence="1">2.7.1.50</ecNumber>
    </recommendedName>
    <alternativeName>
        <fullName evidence="1">4-methyl-5-beta-hydroxyethylthiazole kinase</fullName>
        <shortName evidence="1">TH kinase</shortName>
        <shortName evidence="1">Thz kinase</shortName>
    </alternativeName>
</protein>
<sequence length="264" mass="27809">MSTLQEEIFNSIKEMKSKSPLVHNITNFVVMQITANALLAVGASPVMTFEKEEFEDMLSIASSLVVNIGTLTKTSIEAMHKACETANKKNVPFVLDPVGAGATKLRTKTAIDLIKNYNPKVVRGNASEIMVLAGESIKTKGVDSTANVNMALEAGKHLAKEYNTVVSISGETDIITDGNKVLYVSGGSPLMPVNTGMGCTSTAITGAMLAVSNPLIAAASAMCIMASAGEKASKKSEGPASFAVAFIDELYKLDINDAANRVKE</sequence>
<proteinExistence type="inferred from homology"/>
<name>THIM_BRAHW</name>
<feature type="chain" id="PRO_1000198110" description="Hydroxyethylthiazole kinase">
    <location>
        <begin position="1"/>
        <end position="264"/>
    </location>
</feature>
<feature type="binding site" evidence="1">
    <location>
        <position position="47"/>
    </location>
    <ligand>
        <name>substrate</name>
    </ligand>
</feature>
<feature type="binding site" evidence="1">
    <location>
        <position position="123"/>
    </location>
    <ligand>
        <name>ATP</name>
        <dbReference type="ChEBI" id="CHEBI:30616"/>
    </ligand>
</feature>
<feature type="binding site" evidence="1">
    <location>
        <position position="169"/>
    </location>
    <ligand>
        <name>ATP</name>
        <dbReference type="ChEBI" id="CHEBI:30616"/>
    </ligand>
</feature>
<feature type="binding site" evidence="1">
    <location>
        <position position="196"/>
    </location>
    <ligand>
        <name>substrate</name>
    </ligand>
</feature>
<accession>C0QWJ2</accession>
<organism>
    <name type="scientific">Brachyspira hyodysenteriae (strain ATCC 49526 / WA1)</name>
    <dbReference type="NCBI Taxonomy" id="565034"/>
    <lineage>
        <taxon>Bacteria</taxon>
        <taxon>Pseudomonadati</taxon>
        <taxon>Spirochaetota</taxon>
        <taxon>Spirochaetia</taxon>
        <taxon>Brachyspirales</taxon>
        <taxon>Brachyspiraceae</taxon>
        <taxon>Brachyspira</taxon>
    </lineage>
</organism>
<evidence type="ECO:0000255" key="1">
    <source>
        <dbReference type="HAMAP-Rule" id="MF_00228"/>
    </source>
</evidence>
<reference key="1">
    <citation type="journal article" date="2009" name="PLoS ONE">
        <title>Genome sequence of the pathogenic intestinal spirochete Brachyspira hyodysenteriae reveals adaptations to its lifestyle in the porcine large intestine.</title>
        <authorList>
            <person name="Bellgard M.I."/>
            <person name="Wanchanthuek P."/>
            <person name="La T."/>
            <person name="Ryan K."/>
            <person name="Moolhuijzen P."/>
            <person name="Albertyn Z."/>
            <person name="Shaban B."/>
            <person name="Motro Y."/>
            <person name="Dunn D.S."/>
            <person name="Schibeci D."/>
            <person name="Hunter A."/>
            <person name="Barrero R."/>
            <person name="Phillips N.D."/>
            <person name="Hampson D.J."/>
        </authorList>
    </citation>
    <scope>NUCLEOTIDE SEQUENCE [LARGE SCALE GENOMIC DNA]</scope>
    <source>
        <strain>ATCC 49526 / WA1</strain>
    </source>
</reference>
<gene>
    <name evidence="1" type="primary">thiM</name>
    <name type="ordered locus">BHWA1_00131</name>
</gene>